<name>ADD_MYCTA</name>
<feature type="chain" id="PRO_1000017673" description="Adenosine deaminase">
    <location>
        <begin position="1"/>
        <end position="365"/>
    </location>
</feature>
<feature type="active site" description="Proton donor" evidence="1">
    <location>
        <position position="211"/>
    </location>
</feature>
<feature type="binding site" evidence="1">
    <location>
        <position position="19"/>
    </location>
    <ligand>
        <name>Zn(2+)</name>
        <dbReference type="ChEBI" id="CHEBI:29105"/>
        <note>catalytic</note>
    </ligand>
</feature>
<feature type="binding site" evidence="1">
    <location>
        <position position="21"/>
    </location>
    <ligand>
        <name>substrate</name>
    </ligand>
</feature>
<feature type="binding site" evidence="1">
    <location>
        <position position="21"/>
    </location>
    <ligand>
        <name>Zn(2+)</name>
        <dbReference type="ChEBI" id="CHEBI:29105"/>
        <note>catalytic</note>
    </ligand>
</feature>
<feature type="binding site" evidence="1">
    <location>
        <position position="23"/>
    </location>
    <ligand>
        <name>substrate</name>
    </ligand>
</feature>
<feature type="binding site" evidence="1">
    <location>
        <position position="181"/>
    </location>
    <ligand>
        <name>substrate</name>
    </ligand>
</feature>
<feature type="binding site" evidence="1">
    <location>
        <position position="208"/>
    </location>
    <ligand>
        <name>Zn(2+)</name>
        <dbReference type="ChEBI" id="CHEBI:29105"/>
        <note>catalytic</note>
    </ligand>
</feature>
<feature type="binding site" evidence="1">
    <location>
        <position position="300"/>
    </location>
    <ligand>
        <name>Zn(2+)</name>
        <dbReference type="ChEBI" id="CHEBI:29105"/>
        <note>catalytic</note>
    </ligand>
</feature>
<feature type="site" description="Important for catalytic activity" evidence="1">
    <location>
        <position position="232"/>
    </location>
</feature>
<comment type="function">
    <text evidence="1">Catalyzes the hydrolytic deamination of adenosine and 2-deoxyadenosine.</text>
</comment>
<comment type="catalytic activity">
    <reaction evidence="1">
        <text>adenosine + H2O + H(+) = inosine + NH4(+)</text>
        <dbReference type="Rhea" id="RHEA:24408"/>
        <dbReference type="ChEBI" id="CHEBI:15377"/>
        <dbReference type="ChEBI" id="CHEBI:15378"/>
        <dbReference type="ChEBI" id="CHEBI:16335"/>
        <dbReference type="ChEBI" id="CHEBI:17596"/>
        <dbReference type="ChEBI" id="CHEBI:28938"/>
        <dbReference type="EC" id="3.5.4.4"/>
    </reaction>
    <physiologicalReaction direction="left-to-right" evidence="1">
        <dbReference type="Rhea" id="RHEA:24409"/>
    </physiologicalReaction>
</comment>
<comment type="catalytic activity">
    <reaction evidence="1">
        <text>2'-deoxyadenosine + H2O + H(+) = 2'-deoxyinosine + NH4(+)</text>
        <dbReference type="Rhea" id="RHEA:28190"/>
        <dbReference type="ChEBI" id="CHEBI:15377"/>
        <dbReference type="ChEBI" id="CHEBI:15378"/>
        <dbReference type="ChEBI" id="CHEBI:17256"/>
        <dbReference type="ChEBI" id="CHEBI:28938"/>
        <dbReference type="ChEBI" id="CHEBI:28997"/>
        <dbReference type="EC" id="3.5.4.4"/>
    </reaction>
    <physiologicalReaction direction="left-to-right" evidence="1">
        <dbReference type="Rhea" id="RHEA:28191"/>
    </physiologicalReaction>
</comment>
<comment type="cofactor">
    <cofactor evidence="1">
        <name>Zn(2+)</name>
        <dbReference type="ChEBI" id="CHEBI:29105"/>
    </cofactor>
    <text evidence="1">Binds 1 zinc ion per subunit.</text>
</comment>
<comment type="similarity">
    <text evidence="1">Belongs to the metallo-dependent hydrolases superfamily. Adenosine and AMP deaminases family. Adenosine deaminase subfamily.</text>
</comment>
<sequence>MTAAPTLQTIRLAPKALLHDHLDGGLRPATVLDIAGQVGYDDLPATDVDALASWFRTQSHSGSLERYLEPFSHTVAVMQTPEALYRVAFECAQDLAADSVVYAEVRFAPELHISCGLSFDDVVDTVLTGFAAGEKACAADGQPITVRCLVTAMRHAAMSREIAELAIRFRDKGVVGFDIAGAEAGHPPTRHLDAFEYMRDHNARFTIHAGEAFGLPSIHEAIAFCGADRLGHGVRIVDDIDVDADGGFQLGRLAAILRDKRIPLELCPSSNVQTGAVASIAEHPFDLLARARFRVTVNTDNRLMSDTSMSLEMHRLVEAFGYGWSDLARFTVNAMKSAFIPFDQRLAIIDEVIKPRFAALMGHSE</sequence>
<organism>
    <name type="scientific">Mycobacterium tuberculosis (strain ATCC 25177 / H37Ra)</name>
    <dbReference type="NCBI Taxonomy" id="419947"/>
    <lineage>
        <taxon>Bacteria</taxon>
        <taxon>Bacillati</taxon>
        <taxon>Actinomycetota</taxon>
        <taxon>Actinomycetes</taxon>
        <taxon>Mycobacteriales</taxon>
        <taxon>Mycobacteriaceae</taxon>
        <taxon>Mycobacterium</taxon>
        <taxon>Mycobacterium tuberculosis complex</taxon>
    </lineage>
</organism>
<reference key="1">
    <citation type="journal article" date="2008" name="PLoS ONE">
        <title>Genetic basis of virulence attenuation revealed by comparative genomic analysis of Mycobacterium tuberculosis strain H37Ra versus H37Rv.</title>
        <authorList>
            <person name="Zheng H."/>
            <person name="Lu L."/>
            <person name="Wang B."/>
            <person name="Pu S."/>
            <person name="Zhang X."/>
            <person name="Zhu G."/>
            <person name="Shi W."/>
            <person name="Zhang L."/>
            <person name="Wang H."/>
            <person name="Wang S."/>
            <person name="Zhao G."/>
            <person name="Zhang Y."/>
        </authorList>
    </citation>
    <scope>NUCLEOTIDE SEQUENCE [LARGE SCALE GENOMIC DNA]</scope>
    <source>
        <strain>ATCC 25177 / H37Ra</strain>
    </source>
</reference>
<evidence type="ECO:0000255" key="1">
    <source>
        <dbReference type="HAMAP-Rule" id="MF_00540"/>
    </source>
</evidence>
<accession>A5U7Y8</accession>
<protein>
    <recommendedName>
        <fullName evidence="1">Adenosine deaminase</fullName>
        <ecNumber evidence="1">3.5.4.4</ecNumber>
    </recommendedName>
    <alternativeName>
        <fullName evidence="1">Adenosine aminohydrolase</fullName>
    </alternativeName>
</protein>
<keyword id="KW-0378">Hydrolase</keyword>
<keyword id="KW-0479">Metal-binding</keyword>
<keyword id="KW-0546">Nucleotide metabolism</keyword>
<keyword id="KW-1185">Reference proteome</keyword>
<keyword id="KW-0862">Zinc</keyword>
<gene>
    <name evidence="1" type="primary">add</name>
    <name type="ordered locus">MRA_3355</name>
</gene>
<dbReference type="EC" id="3.5.4.4" evidence="1"/>
<dbReference type="EMBL" id="CP000611">
    <property type="protein sequence ID" value="ABQ75138.1"/>
    <property type="molecule type" value="Genomic_DNA"/>
</dbReference>
<dbReference type="RefSeq" id="WP_003417259.1">
    <property type="nucleotide sequence ID" value="NZ_CP016972.1"/>
</dbReference>
<dbReference type="SMR" id="A5U7Y8"/>
<dbReference type="KEGG" id="mra:MRA_3355"/>
<dbReference type="eggNOG" id="COG1816">
    <property type="taxonomic scope" value="Bacteria"/>
</dbReference>
<dbReference type="HOGENOM" id="CLU_039228_0_0_11"/>
<dbReference type="Proteomes" id="UP000001988">
    <property type="component" value="Chromosome"/>
</dbReference>
<dbReference type="GO" id="GO:0005829">
    <property type="term" value="C:cytosol"/>
    <property type="evidence" value="ECO:0007669"/>
    <property type="project" value="TreeGrafter"/>
</dbReference>
<dbReference type="GO" id="GO:0046936">
    <property type="term" value="F:2'-deoxyadenosine deaminase activity"/>
    <property type="evidence" value="ECO:0007669"/>
    <property type="project" value="RHEA"/>
</dbReference>
<dbReference type="GO" id="GO:0004000">
    <property type="term" value="F:adenosine deaminase activity"/>
    <property type="evidence" value="ECO:0007669"/>
    <property type="project" value="UniProtKB-UniRule"/>
</dbReference>
<dbReference type="GO" id="GO:0008270">
    <property type="term" value="F:zinc ion binding"/>
    <property type="evidence" value="ECO:0007669"/>
    <property type="project" value="UniProtKB-UniRule"/>
</dbReference>
<dbReference type="GO" id="GO:0006154">
    <property type="term" value="P:adenosine catabolic process"/>
    <property type="evidence" value="ECO:0007669"/>
    <property type="project" value="TreeGrafter"/>
</dbReference>
<dbReference type="GO" id="GO:0043103">
    <property type="term" value="P:hypoxanthine salvage"/>
    <property type="evidence" value="ECO:0007669"/>
    <property type="project" value="TreeGrafter"/>
</dbReference>
<dbReference type="GO" id="GO:0046103">
    <property type="term" value="P:inosine biosynthetic process"/>
    <property type="evidence" value="ECO:0007669"/>
    <property type="project" value="TreeGrafter"/>
</dbReference>
<dbReference type="GO" id="GO:0009117">
    <property type="term" value="P:nucleotide metabolic process"/>
    <property type="evidence" value="ECO:0007669"/>
    <property type="project" value="UniProtKB-KW"/>
</dbReference>
<dbReference type="GO" id="GO:0009168">
    <property type="term" value="P:purine ribonucleoside monophosphate biosynthetic process"/>
    <property type="evidence" value="ECO:0007669"/>
    <property type="project" value="UniProtKB-UniRule"/>
</dbReference>
<dbReference type="FunFam" id="3.20.20.140:FF:000020">
    <property type="entry name" value="Adenosine deaminase"/>
    <property type="match status" value="1"/>
</dbReference>
<dbReference type="Gene3D" id="3.20.20.140">
    <property type="entry name" value="Metal-dependent hydrolases"/>
    <property type="match status" value="1"/>
</dbReference>
<dbReference type="HAMAP" id="MF_00540">
    <property type="entry name" value="A_deaminase"/>
    <property type="match status" value="1"/>
</dbReference>
<dbReference type="InterPro" id="IPR028893">
    <property type="entry name" value="A_deaminase"/>
</dbReference>
<dbReference type="InterPro" id="IPR001365">
    <property type="entry name" value="A_deaminase_dom"/>
</dbReference>
<dbReference type="InterPro" id="IPR006330">
    <property type="entry name" value="Ado/ade_deaminase"/>
</dbReference>
<dbReference type="InterPro" id="IPR032466">
    <property type="entry name" value="Metal_Hydrolase"/>
</dbReference>
<dbReference type="NCBIfam" id="TIGR01430">
    <property type="entry name" value="aden_deam"/>
    <property type="match status" value="1"/>
</dbReference>
<dbReference type="NCBIfam" id="NF006847">
    <property type="entry name" value="PRK09358.1-2"/>
    <property type="match status" value="1"/>
</dbReference>
<dbReference type="PANTHER" id="PTHR11409">
    <property type="entry name" value="ADENOSINE DEAMINASE"/>
    <property type="match status" value="1"/>
</dbReference>
<dbReference type="PANTHER" id="PTHR11409:SF43">
    <property type="entry name" value="ADENOSINE DEAMINASE"/>
    <property type="match status" value="1"/>
</dbReference>
<dbReference type="Pfam" id="PF00962">
    <property type="entry name" value="A_deaminase"/>
    <property type="match status" value="1"/>
</dbReference>
<dbReference type="SUPFAM" id="SSF51556">
    <property type="entry name" value="Metallo-dependent hydrolases"/>
    <property type="match status" value="1"/>
</dbReference>
<proteinExistence type="inferred from homology"/>